<proteinExistence type="evidence at transcript level"/>
<dbReference type="EMBL" id="AB026659">
    <property type="protein sequence ID" value="BAB08660.1"/>
    <property type="molecule type" value="Genomic_DNA"/>
</dbReference>
<dbReference type="EMBL" id="CP002688">
    <property type="protein sequence ID" value="AED96702.1"/>
    <property type="molecule type" value="Genomic_DNA"/>
</dbReference>
<dbReference type="EMBL" id="DQ447080">
    <property type="protein sequence ID" value="ABE66252.1"/>
    <property type="molecule type" value="mRNA"/>
</dbReference>
<dbReference type="EMBL" id="DQ653372">
    <property type="protein sequence ID" value="ABK28760.1"/>
    <property type="status" value="ALT_SEQ"/>
    <property type="molecule type" value="mRNA"/>
</dbReference>
<dbReference type="EMBL" id="AK230288">
    <property type="protein sequence ID" value="BAF02090.1"/>
    <property type="molecule type" value="mRNA"/>
</dbReference>
<dbReference type="EMBL" id="AY087465">
    <property type="protein sequence ID" value="AAM65010.1"/>
    <property type="molecule type" value="mRNA"/>
</dbReference>
<dbReference type="RefSeq" id="NP_200406.1">
    <property type="nucleotide sequence ID" value="NM_124977.4"/>
</dbReference>
<dbReference type="SMR" id="Q9FG70"/>
<dbReference type="GlyGen" id="Q9FG70">
    <property type="glycosylation" value="1 site"/>
</dbReference>
<dbReference type="PaxDb" id="3702-AT5G55950.1"/>
<dbReference type="EnsemblPlants" id="AT5G55950.1">
    <property type="protein sequence ID" value="AT5G55950.1"/>
    <property type="gene ID" value="AT5G55950"/>
</dbReference>
<dbReference type="GeneID" id="835693"/>
<dbReference type="Gramene" id="AT5G55950.1">
    <property type="protein sequence ID" value="AT5G55950.1"/>
    <property type="gene ID" value="AT5G55950"/>
</dbReference>
<dbReference type="KEGG" id="ath:AT5G55950"/>
<dbReference type="Araport" id="AT5G55950"/>
<dbReference type="TAIR" id="AT5G55950"/>
<dbReference type="eggNOG" id="KOG1441">
    <property type="taxonomic scope" value="Eukaryota"/>
</dbReference>
<dbReference type="HOGENOM" id="CLU_048347_1_1_1"/>
<dbReference type="InParanoid" id="Q9FG70"/>
<dbReference type="OMA" id="IHYSTAW"/>
<dbReference type="PhylomeDB" id="Q9FG70"/>
<dbReference type="PRO" id="PR:Q9FG70"/>
<dbReference type="Proteomes" id="UP000006548">
    <property type="component" value="Chromosome 5"/>
</dbReference>
<dbReference type="ExpressionAtlas" id="Q9FG70">
    <property type="expression patterns" value="baseline and differential"/>
</dbReference>
<dbReference type="GO" id="GO:0016020">
    <property type="term" value="C:membrane"/>
    <property type="evidence" value="ECO:0007669"/>
    <property type="project" value="UniProtKB-SubCell"/>
</dbReference>
<dbReference type="InterPro" id="IPR004853">
    <property type="entry name" value="Sugar_P_trans_dom"/>
</dbReference>
<dbReference type="InterPro" id="IPR050186">
    <property type="entry name" value="TPT_transporter"/>
</dbReference>
<dbReference type="PANTHER" id="PTHR11132">
    <property type="entry name" value="SOLUTE CARRIER FAMILY 35"/>
    <property type="match status" value="1"/>
</dbReference>
<dbReference type="Pfam" id="PF03151">
    <property type="entry name" value="TPT"/>
    <property type="match status" value="1"/>
</dbReference>
<reference key="1">
    <citation type="submission" date="1999-04" db="EMBL/GenBank/DDBJ databases">
        <title>Structural analysis of Arabidopsis thaliana chromosome 5. XI.</title>
        <authorList>
            <person name="Kaneko T."/>
            <person name="Katoh T."/>
            <person name="Asamizu E."/>
            <person name="Sato S."/>
            <person name="Nakamura Y."/>
            <person name="Kotani H."/>
            <person name="Tabata S."/>
        </authorList>
    </citation>
    <scope>NUCLEOTIDE SEQUENCE [LARGE SCALE GENOMIC DNA]</scope>
    <source>
        <strain>cv. Columbia</strain>
    </source>
</reference>
<reference key="2">
    <citation type="journal article" date="2017" name="Plant J.">
        <title>Araport11: a complete reannotation of the Arabidopsis thaliana reference genome.</title>
        <authorList>
            <person name="Cheng C.Y."/>
            <person name="Krishnakumar V."/>
            <person name="Chan A.P."/>
            <person name="Thibaud-Nissen F."/>
            <person name="Schobel S."/>
            <person name="Town C.D."/>
        </authorList>
    </citation>
    <scope>GENOME REANNOTATION</scope>
    <source>
        <strain>cv. Columbia</strain>
    </source>
</reference>
<reference key="3">
    <citation type="journal article" date="2006" name="Plant Biotechnol. J.">
        <title>Simultaneous high-throughput recombinational cloning of open reading frames in closed and open configurations.</title>
        <authorList>
            <person name="Underwood B.A."/>
            <person name="Vanderhaeghen R."/>
            <person name="Whitford R."/>
            <person name="Town C.D."/>
            <person name="Hilson P."/>
        </authorList>
    </citation>
    <scope>NUCLEOTIDE SEQUENCE [LARGE SCALE MRNA]</scope>
    <source>
        <strain>cv. Columbia</strain>
    </source>
</reference>
<reference key="4">
    <citation type="submission" date="2006-05" db="EMBL/GenBank/DDBJ databases">
        <authorList>
            <person name="Underwood B.A."/>
            <person name="Xiao Y.-L."/>
            <person name="Moskal W.A. Jr."/>
            <person name="Monaghan E.L."/>
            <person name="Wang W."/>
            <person name="Redman J.C."/>
            <person name="Wu H.C."/>
            <person name="Utterback T."/>
            <person name="Town C.D."/>
        </authorList>
    </citation>
    <scope>NUCLEOTIDE SEQUENCE [LARGE SCALE MRNA]</scope>
    <source>
        <strain>cv. Columbia</strain>
    </source>
</reference>
<reference key="5">
    <citation type="submission" date="2006-07" db="EMBL/GenBank/DDBJ databases">
        <title>Large-scale analysis of RIKEN Arabidopsis full-length (RAFL) cDNAs.</title>
        <authorList>
            <person name="Totoki Y."/>
            <person name="Seki M."/>
            <person name="Ishida J."/>
            <person name="Nakajima M."/>
            <person name="Enju A."/>
            <person name="Kamiya A."/>
            <person name="Narusaka M."/>
            <person name="Shin-i T."/>
            <person name="Nakagawa M."/>
            <person name="Sakamoto N."/>
            <person name="Oishi K."/>
            <person name="Kohara Y."/>
            <person name="Kobayashi M."/>
            <person name="Toyoda A."/>
            <person name="Sakaki Y."/>
            <person name="Sakurai T."/>
            <person name="Iida K."/>
            <person name="Akiyama K."/>
            <person name="Satou M."/>
            <person name="Toyoda T."/>
            <person name="Konagaya A."/>
            <person name="Carninci P."/>
            <person name="Kawai J."/>
            <person name="Hayashizaki Y."/>
            <person name="Shinozaki K."/>
        </authorList>
    </citation>
    <scope>NUCLEOTIDE SEQUENCE [LARGE SCALE MRNA]</scope>
    <source>
        <strain>cv. Columbia</strain>
    </source>
</reference>
<reference key="6">
    <citation type="submission" date="2002-03" db="EMBL/GenBank/DDBJ databases">
        <title>Full-length cDNA from Arabidopsis thaliana.</title>
        <authorList>
            <person name="Brover V.V."/>
            <person name="Troukhan M.E."/>
            <person name="Alexandrov N.A."/>
            <person name="Lu Y.-P."/>
            <person name="Flavell R.B."/>
            <person name="Feldmann K.A."/>
        </authorList>
    </citation>
    <scope>NUCLEOTIDE SEQUENCE [LARGE SCALE MRNA]</scope>
</reference>
<reference key="7">
    <citation type="journal article" date="2014" name="Proc. Natl. Acad. Sci. U.S.A.">
        <title>The Golgi localized bifunctional UDP-rhamnose/UDP-galactose transporter family of Arabidopsis.</title>
        <authorList>
            <person name="Rautengarten C."/>
            <person name="Ebert B."/>
            <person name="Moreno I."/>
            <person name="Temple H."/>
            <person name="Herter T."/>
            <person name="Link B."/>
            <person name="Donas-Cofre D."/>
            <person name="Moreno A."/>
            <person name="Saez-Aguayo S."/>
            <person name="Blanco F."/>
            <person name="Mortimer J.C."/>
            <person name="Schultink A."/>
            <person name="Reiter W.D."/>
            <person name="Dupree P."/>
            <person name="Pauly M."/>
            <person name="Heazlewood J.L."/>
            <person name="Scheller H.V."/>
            <person name="Orellana A."/>
        </authorList>
    </citation>
    <scope>GENE FAMILY</scope>
</reference>
<reference key="8">
    <citation type="journal article" date="2015" name="Plant Cell">
        <title>Identification and characterization of a Golgi-localized UDP-xylose transporter family from Arabidopsis.</title>
        <authorList>
            <person name="Ebert B."/>
            <person name="Rautengarten C."/>
            <person name="Guo X."/>
            <person name="Xiong G."/>
            <person name="Stonebloom S."/>
            <person name="Smith-Moritz A.M."/>
            <person name="Herter T."/>
            <person name="Chan L.J."/>
            <person name="Adams P.D."/>
            <person name="Petzold C.J."/>
            <person name="Pauly M."/>
            <person name="Willats W.G."/>
            <person name="Heazlewood J.L."/>
            <person name="Scheller H.V."/>
        </authorList>
    </citation>
    <scope>GENE FAMILY</scope>
</reference>
<protein>
    <recommendedName>
        <fullName evidence="2">Nucleotide-sugar uncharacterized transporter 2</fullName>
    </recommendedName>
</protein>
<gene>
    <name evidence="3" type="ordered locus">At5g55950</name>
    <name evidence="4" type="ORF">MYN21.6</name>
</gene>
<keyword id="KW-0472">Membrane</keyword>
<keyword id="KW-1185">Reference proteome</keyword>
<keyword id="KW-0762">Sugar transport</keyword>
<keyword id="KW-0812">Transmembrane</keyword>
<keyword id="KW-1133">Transmembrane helix</keyword>
<keyword id="KW-0813">Transport</keyword>
<sequence>MGLVDSLLGKDARKFLKRKDSDAAEAGRALEELRSSLYNELKTSEGAKRQQQRFCGPVVAMSFNFVVAVGIILANKLVMGRVGFNFPIFLTLIHYTVAWILLAFFKSLSLLPMSPPSKTTPFSSLFSLGAVMAFASGLANTSLKHNSVGFYQMAKIAVTPTIVLAEFVLFKKTISSTKVMALAVVSLGVAIATVTDLEFNLFGALVAVAWIIPSAINKILWSNLQQQANWTALALMWKTTPFTVFFLLALMPWLDPPGVLLFKWDLTNSSAILISALLGFLLQWSGALALGATSATSHVVLGQFKTCVILLGGYVIFGSDPGFISICGAIAALGGMSVYTWLNLPGKSIDHMSNKQLPKQNVTVSKPKAEADDGGGETGVTVVSVDPLLSKTITANIV</sequence>
<feature type="chain" id="PRO_0000439528" description="Nucleotide-sugar uncharacterized transporter 2">
    <location>
        <begin position="1"/>
        <end position="398"/>
    </location>
</feature>
<feature type="transmembrane region" description="Helical" evidence="1">
    <location>
        <begin position="54"/>
        <end position="74"/>
    </location>
</feature>
<feature type="transmembrane region" description="Helical" evidence="1">
    <location>
        <begin position="84"/>
        <end position="104"/>
    </location>
</feature>
<feature type="transmembrane region" description="Helical" evidence="1">
    <location>
        <begin position="119"/>
        <end position="139"/>
    </location>
</feature>
<feature type="transmembrane region" description="Helical" evidence="1">
    <location>
        <begin position="150"/>
        <end position="170"/>
    </location>
</feature>
<feature type="transmembrane region" description="Helical" evidence="1">
    <location>
        <begin position="179"/>
        <end position="199"/>
    </location>
</feature>
<feature type="transmembrane region" description="Helical" evidence="1">
    <location>
        <begin position="201"/>
        <end position="221"/>
    </location>
</feature>
<feature type="transmembrane region" description="Helical" evidence="1">
    <location>
        <begin position="242"/>
        <end position="262"/>
    </location>
</feature>
<feature type="transmembrane region" description="Helical" evidence="1">
    <location>
        <begin position="271"/>
        <end position="291"/>
    </location>
</feature>
<feature type="transmembrane region" description="Helical" evidence="1">
    <location>
        <begin position="299"/>
        <end position="319"/>
    </location>
</feature>
<feature type="transmembrane region" description="Helical" evidence="1">
    <location>
        <begin position="322"/>
        <end position="342"/>
    </location>
</feature>
<feature type="sequence conflict" description="In Ref. 6; AAM65010." evidence="2" ref="6">
    <location>
        <position position="17"/>
    </location>
</feature>
<feature type="sequence conflict" description="In Ref. 6; AAM65010." evidence="2" ref="6">
    <original>I</original>
    <variation>V</variation>
    <location>
        <position position="330"/>
    </location>
</feature>
<organism>
    <name type="scientific">Arabidopsis thaliana</name>
    <name type="common">Mouse-ear cress</name>
    <dbReference type="NCBI Taxonomy" id="3702"/>
    <lineage>
        <taxon>Eukaryota</taxon>
        <taxon>Viridiplantae</taxon>
        <taxon>Streptophyta</taxon>
        <taxon>Embryophyta</taxon>
        <taxon>Tracheophyta</taxon>
        <taxon>Spermatophyta</taxon>
        <taxon>Magnoliopsida</taxon>
        <taxon>eudicotyledons</taxon>
        <taxon>Gunneridae</taxon>
        <taxon>Pentapetalae</taxon>
        <taxon>rosids</taxon>
        <taxon>malvids</taxon>
        <taxon>Brassicales</taxon>
        <taxon>Brassicaceae</taxon>
        <taxon>Camelineae</taxon>
        <taxon>Arabidopsis</taxon>
    </lineage>
</organism>
<accession>Q9FG70</accession>
<accession>A0MFP6</accession>
<accession>Q8LB26</accession>
<name>NSTU2_ARATH</name>
<comment type="subcellular location">
    <subcellularLocation>
        <location evidence="1">Membrane</location>
        <topology evidence="1">Multi-pass membrane protein</topology>
    </subcellularLocation>
</comment>
<comment type="similarity">
    <text evidence="2">Belongs to the TPT transporter family. TPT (TC 2.A.7.9) subfamily.</text>
</comment>
<comment type="sequence caution" evidence="2">
    <conflict type="erroneous termination">
        <sequence resource="EMBL-CDS" id="ABK28760"/>
    </conflict>
    <text>Extended C-terminus.</text>
</comment>
<evidence type="ECO:0000255" key="1"/>
<evidence type="ECO:0000305" key="2"/>
<evidence type="ECO:0000312" key="3">
    <source>
        <dbReference type="Araport" id="AT5G55950"/>
    </source>
</evidence>
<evidence type="ECO:0000312" key="4">
    <source>
        <dbReference type="EMBL" id="BAB08660.1"/>
    </source>
</evidence>